<reference key="1">
    <citation type="journal article" date="1989" name="Nucleic Acids Res.">
        <title>The complete sequence of soybean chlorotic mottle virus DNA and the identification of a novel promoter.</title>
        <authorList>
            <person name="Hasegawa A."/>
            <person name="Verver J."/>
            <person name="Shimada A."/>
            <person name="Saito M."/>
            <person name="Goldbach R."/>
            <person name="van Kammen A."/>
            <person name="Miki K."/>
            <person name="Kameya-Iwaki M."/>
            <person name="Hibi T."/>
        </authorList>
    </citation>
    <scope>NUCLEOTIDE SEQUENCE [GENOMIC DNA]</scope>
</reference>
<reference key="2">
    <citation type="submission" date="2000-11" db="EMBL/GenBank/DDBJ databases">
        <authorList>
            <person name="Hibi T."/>
        </authorList>
    </citation>
    <scope>SEQUENCE REVISION</scope>
</reference>
<protein>
    <recommendedName>
        <fullName>Enzymatic polyprotein</fullName>
    </recommendedName>
    <domain>
        <recommendedName>
            <fullName>Aspartic protease</fullName>
            <ecNumber>3.4.23.-</ecNumber>
        </recommendedName>
    </domain>
    <domain>
        <recommendedName>
            <fullName>Endonuclease</fullName>
        </recommendedName>
    </domain>
    <domain>
        <recommendedName>
            <fullName>Reverse transcriptase</fullName>
            <ecNumber>2.7.7.49</ecNumber>
        </recommendedName>
    </domain>
</protein>
<feature type="chain" id="PRO_0000222057" description="Enzymatic polyprotein">
    <location>
        <begin position="1"/>
        <end position="692"/>
    </location>
</feature>
<feature type="domain" description="Reverse transcriptase" evidence="2">
    <location>
        <begin position="227"/>
        <end position="411"/>
    </location>
</feature>
<feature type="active site" description="For protease activity" evidence="1">
    <location>
        <position position="36"/>
    </location>
</feature>
<accession>P15629</accession>
<organism>
    <name type="scientific">Soybean chlorotic mottle virus</name>
    <dbReference type="NCBI Taxonomy" id="10651"/>
    <lineage>
        <taxon>Viruses</taxon>
        <taxon>Riboviria</taxon>
        <taxon>Pararnavirae</taxon>
        <taxon>Artverviricota</taxon>
        <taxon>Revtraviricetes</taxon>
        <taxon>Ortervirales</taxon>
        <taxon>Caulimoviridae</taxon>
        <taxon>Soymovirus</taxon>
        <taxon>Soymovirus maculaglycinis</taxon>
    </lineage>
</organism>
<sequence>MNTEIVQKHRVLTKGNPNVTFIKVSIGKRNFLAYIDTGATLCFGKRKISNNWEILKQPKEIIIADKSKHYIREAISNVFLKIENKEFLIPIIYLHDSGLDLIIGNNFLKLYQPFIQRLETIELRWKNLNNPKESQMISTKILTKNEVLKLSFEKIHICLEKYLFFKTIEEQLEEVCSEHPLDETKNKNGLLIEIRLKDPLQEINVTNRIPYTIRDVQEFKEECEDLLKKGLIRESQSPHSAPAFYVENHNEIKRGKRRMVINYKKMNEATIGDSYKLPRKDFILEKIKGSLWFSSLDAKSGYYQLRLHENTKPLTAFSCPPQKHYEWNVLSFGLKQAPSIYQRFMDQSLKGLEHICLAYIDDILIFTKGSKEQHVNDVRIVLQRIKEKGIIISKKKSKLIQQEIEYLGLKIQGNGEIDLSPHTQEKILQFPDELEDRKQIQRFLGCINYIANEGFFKNLALERKHLQKKISVKNPWKWDTIDTKMVQSIKGKIQSLPKLYNASIQDFLIVETDASQHSWSGCLRALPKGKQKIGLDEFGIPTADLCTGSSSASSDNSPAEIDKCHSASKQDTHVASKIKKLENELLLCKYVSGTFTDTETRYPIAELEVLAGVKVLEKWRIDLLQTRFLLRTDSKYFAGFCRYNIKTDYRNGRLIRWQLRLQAYQPYVELIKSENNPFADTLTREWSKPSSS</sequence>
<proteinExistence type="inferred from homology"/>
<gene>
    <name type="ORF">ORF V</name>
</gene>
<comment type="function">
    <text evidence="1">Encodes for at least two polypeptides: protease (PR) and reverse transcriptase (RT). The protease processes the polyprotein in cis. Reverse transcriptase is multifunctional enzyme that converts the viral RNA genome into dsDNA in viral cytoplasmic capsids. This enzyme displays a DNA polymerase activity that can copy either DNA or RNA templates, and a ribonuclease H (RNase H) activity that cleaves the RNA strand of RNA-DNA heteroduplexes in a partially processive 3'- to 5'-endonucleasic mode. Neo-synthesized pregenomic RNA (pgRNA) are encapsidated, and reverse-transcribed inside the nucleocapsid. Partial (+)DNA is synthesized from the (-)DNA template and generates the relaxed circular DNA (RC-DNA) genome. After budding and infection, the RC-DNA migrates in the nucleus, and is converted into a plasmid-like covalently closed circular DNA (cccDNA) (By similarity).</text>
</comment>
<comment type="catalytic activity">
    <reaction evidence="2">
        <text>DNA(n) + a 2'-deoxyribonucleoside 5'-triphosphate = DNA(n+1) + diphosphate</text>
        <dbReference type="Rhea" id="RHEA:22508"/>
        <dbReference type="Rhea" id="RHEA-COMP:17339"/>
        <dbReference type="Rhea" id="RHEA-COMP:17340"/>
        <dbReference type="ChEBI" id="CHEBI:33019"/>
        <dbReference type="ChEBI" id="CHEBI:61560"/>
        <dbReference type="ChEBI" id="CHEBI:173112"/>
        <dbReference type="EC" id="2.7.7.49"/>
    </reaction>
</comment>
<comment type="domain">
    <text evidence="1">The polymerase/reverse transcriptase (RT) and ribonuclease H (RH) domains are structured in five subdomains: finger, palm, thumb, connection and RNase H. Within the palm subdomain, the 'primer grip' region is thought to be involved in the positioning of the primer terminus for accommodating the incoming nucleotide. The RH domain stabilizes the association of RT with primer-template (By similarity).</text>
</comment>
<comment type="similarity">
    <text evidence="3">Belongs to the caulimoviridae enzymatic polyprotein family.</text>
</comment>
<evidence type="ECO:0000250" key="1"/>
<evidence type="ECO:0000255" key="2">
    <source>
        <dbReference type="PROSITE-ProRule" id="PRU00405"/>
    </source>
</evidence>
<evidence type="ECO:0000305" key="3"/>
<keyword id="KW-0064">Aspartyl protease</keyword>
<keyword id="KW-0255">Endonuclease</keyword>
<keyword id="KW-0378">Hydrolase</keyword>
<keyword id="KW-0540">Nuclease</keyword>
<keyword id="KW-0548">Nucleotidyltransferase</keyword>
<keyword id="KW-0645">Protease</keyword>
<keyword id="KW-1185">Reference proteome</keyword>
<keyword id="KW-0695">RNA-directed DNA polymerase</keyword>
<keyword id="KW-0808">Transferase</keyword>
<organismHost>
    <name type="scientific">Glycine max</name>
    <name type="common">Soybean</name>
    <name type="synonym">Glycine hispida</name>
    <dbReference type="NCBI Taxonomy" id="3847"/>
</organismHost>
<organismHost>
    <name type="scientific">Lablab purpureus</name>
    <name type="common">Hyacinth bean</name>
    <name type="synonym">Dolichos lablab</name>
    <dbReference type="NCBI Taxonomy" id="35936"/>
</organismHost>
<organismHost>
    <name type="scientific">Phaseolus vulgaris</name>
    <name type="common">Kidney bean</name>
    <name type="synonym">French bean</name>
    <dbReference type="NCBI Taxonomy" id="3885"/>
</organismHost>
<organismHost>
    <name type="scientific">Vigna unguiculata</name>
    <name type="common">Cowpea</name>
    <dbReference type="NCBI Taxonomy" id="3917"/>
</organismHost>
<name>POL_SOCMV</name>
<dbReference type="EC" id="3.4.23.-"/>
<dbReference type="EC" id="2.7.7.49"/>
<dbReference type="EMBL" id="X15828">
    <property type="protein sequence ID" value="CAC16945.1"/>
    <property type="molecule type" value="Genomic_DNA"/>
</dbReference>
<dbReference type="PIR" id="JS0375">
    <property type="entry name" value="JS0375"/>
</dbReference>
<dbReference type="SMR" id="P15629"/>
<dbReference type="MEROPS" id="A03.001"/>
<dbReference type="KEGG" id="vg:912254"/>
<dbReference type="OrthoDB" id="2224at10239"/>
<dbReference type="Proteomes" id="UP000001065">
    <property type="component" value="Genome"/>
</dbReference>
<dbReference type="GO" id="GO:0004190">
    <property type="term" value="F:aspartic-type endopeptidase activity"/>
    <property type="evidence" value="ECO:0007669"/>
    <property type="project" value="UniProtKB-KW"/>
</dbReference>
<dbReference type="GO" id="GO:0004519">
    <property type="term" value="F:endonuclease activity"/>
    <property type="evidence" value="ECO:0007669"/>
    <property type="project" value="UniProtKB-KW"/>
</dbReference>
<dbReference type="GO" id="GO:0003964">
    <property type="term" value="F:RNA-directed DNA polymerase activity"/>
    <property type="evidence" value="ECO:0007669"/>
    <property type="project" value="UniProtKB-KW"/>
</dbReference>
<dbReference type="GO" id="GO:0006508">
    <property type="term" value="P:proteolysis"/>
    <property type="evidence" value="ECO:0007669"/>
    <property type="project" value="UniProtKB-KW"/>
</dbReference>
<dbReference type="CDD" id="cd00303">
    <property type="entry name" value="retropepsin_like"/>
    <property type="match status" value="1"/>
</dbReference>
<dbReference type="CDD" id="cd01647">
    <property type="entry name" value="RT_LTR"/>
    <property type="match status" value="1"/>
</dbReference>
<dbReference type="Gene3D" id="3.30.70.270">
    <property type="match status" value="1"/>
</dbReference>
<dbReference type="Gene3D" id="2.40.70.10">
    <property type="entry name" value="Acid Proteases"/>
    <property type="match status" value="1"/>
</dbReference>
<dbReference type="Gene3D" id="3.10.10.10">
    <property type="entry name" value="HIV Type 1 Reverse Transcriptase, subunit A, domain 1"/>
    <property type="match status" value="1"/>
</dbReference>
<dbReference type="InterPro" id="IPR043502">
    <property type="entry name" value="DNA/RNA_pol_sf"/>
</dbReference>
<dbReference type="InterPro" id="IPR000588">
    <property type="entry name" value="Pept_A3A"/>
</dbReference>
<dbReference type="InterPro" id="IPR021109">
    <property type="entry name" value="Peptidase_aspartic_dom_sf"/>
</dbReference>
<dbReference type="InterPro" id="IPR043128">
    <property type="entry name" value="Rev_trsase/Diguanyl_cyclase"/>
</dbReference>
<dbReference type="InterPro" id="IPR000477">
    <property type="entry name" value="RT_dom"/>
</dbReference>
<dbReference type="InterPro" id="IPR041373">
    <property type="entry name" value="RT_RNaseH"/>
</dbReference>
<dbReference type="InterPro" id="IPR051320">
    <property type="entry name" value="Viral_Replic_Matur_Polypro"/>
</dbReference>
<dbReference type="PANTHER" id="PTHR33064">
    <property type="entry name" value="POL PROTEIN"/>
    <property type="match status" value="1"/>
</dbReference>
<dbReference type="PANTHER" id="PTHR33064:SF37">
    <property type="entry name" value="RIBONUCLEASE H"/>
    <property type="match status" value="1"/>
</dbReference>
<dbReference type="Pfam" id="PF02160">
    <property type="entry name" value="Peptidase_A3"/>
    <property type="match status" value="1"/>
</dbReference>
<dbReference type="Pfam" id="PF17917">
    <property type="entry name" value="RT_RNaseH"/>
    <property type="match status" value="1"/>
</dbReference>
<dbReference type="Pfam" id="PF00078">
    <property type="entry name" value="RVT_1"/>
    <property type="match status" value="1"/>
</dbReference>
<dbReference type="PRINTS" id="PR00731">
    <property type="entry name" value="CAULIMOPTASE"/>
</dbReference>
<dbReference type="SUPFAM" id="SSF50630">
    <property type="entry name" value="Acid proteases"/>
    <property type="match status" value="1"/>
</dbReference>
<dbReference type="SUPFAM" id="SSF56672">
    <property type="entry name" value="DNA/RNA polymerases"/>
    <property type="match status" value="1"/>
</dbReference>
<dbReference type="PROSITE" id="PS50878">
    <property type="entry name" value="RT_POL"/>
    <property type="match status" value="1"/>
</dbReference>